<keyword id="KW-1015">Disulfide bond</keyword>
<keyword id="KW-0325">Glycoprotein</keyword>
<keyword id="KW-0378">Hydrolase</keyword>
<keyword id="KW-0442">Lipid degradation</keyword>
<keyword id="KW-0443">Lipid metabolism</keyword>
<keyword id="KW-1185">Reference proteome</keyword>
<keyword id="KW-0732">Signal</keyword>
<keyword id="KW-0843">Virulence</keyword>
<sequence>MFVFLALITLTTCLQIPLNPTIDDFYNPPKDLETSQLGDVLKWRKMPFPVTSMFVNLPISNAWQISVRSQDTLNNSLAIVATILEPPNGDKNKLISHQAFENSPLLSCSPSYSMQVPSFETFQIQADLIFISGLLSQGWYVVVPDYEGPNSVFPVGRQSAYSVLDSIRGTIKFFNSTGNSTVKTALLGYSYGAVASLWASIVQPNYAPELELVGAAVGCTIPNITAFIEKVDEGPYSGLIVNIFNGLANEYRHFRDRLIHFGALQPLGCLFPICRKFFFQKMIGGVYDAQVLTDETIKETIEINNLLSTRAVPQIPVFLFHSKFNEMSPFLEILKLEKLWCSQLGVNLEIAEDMSYNHMVEAFSGMPAAITWIEKRWNNSTLGGCKHVHRLSNFEYPGIAPFLSQYFRSSLQMVLNNNRYFNNTTR</sequence>
<feature type="signal peptide" evidence="3">
    <location>
        <begin position="1"/>
        <end position="15"/>
    </location>
</feature>
<feature type="chain" id="PRO_0000017826" description="Lipase 7">
    <location>
        <begin position="16"/>
        <end position="426"/>
    </location>
</feature>
<feature type="active site" description="Charge relay system" evidence="2">
    <location>
        <position position="190"/>
    </location>
</feature>
<feature type="active site" description="Charge relay system" evidence="2">
    <location>
        <position position="358"/>
    </location>
</feature>
<feature type="glycosylation site" description="N-linked (GlcNAc...) asparagine" evidence="3">
    <location>
        <position position="74"/>
    </location>
</feature>
<feature type="glycosylation site" description="N-linked (GlcNAc...) asparagine" evidence="3">
    <location>
        <position position="175"/>
    </location>
</feature>
<feature type="glycosylation site" description="N-linked (GlcNAc...) asparagine" evidence="3">
    <location>
        <position position="179"/>
    </location>
</feature>
<feature type="glycosylation site" description="N-linked (GlcNAc...) asparagine" evidence="3">
    <location>
        <position position="223"/>
    </location>
</feature>
<feature type="glycosylation site" description="N-linked (GlcNAc...) asparagine" evidence="3">
    <location>
        <position position="378"/>
    </location>
</feature>
<feature type="glycosylation site" description="N-linked (GlcNAc...) asparagine" evidence="3">
    <location>
        <position position="379"/>
    </location>
</feature>
<feature type="glycosylation site" description="N-linked (GlcNAc...) asparagine" evidence="3">
    <location>
        <position position="422"/>
    </location>
</feature>
<feature type="glycosylation site" description="N-linked (GlcNAc...) asparagine" evidence="3">
    <location>
        <position position="423"/>
    </location>
</feature>
<feature type="disulfide bond" evidence="2">
    <location>
        <begin position="108"/>
        <end position="269"/>
    </location>
</feature>
<feature type="disulfide bond" evidence="2">
    <location>
        <begin position="341"/>
        <end position="385"/>
    </location>
</feature>
<comment type="function">
    <text evidence="4 8">Secreted lipase that is able to hydrolze both the neutral triacylglycerols and the monopalmitate ester Tween 40, allowing the use of hydrolyzed products as carbon sources (PubMed:11131027). Has broad lipolytic activity, which may be important for colonization and subsequent infection, therefore contributing to the persistence and virulence in human tissue (Probable).</text>
</comment>
<comment type="catalytic activity">
    <reaction evidence="1">
        <text>a triacylglycerol + H2O = a diacylglycerol + a fatty acid + H(+)</text>
        <dbReference type="Rhea" id="RHEA:12044"/>
        <dbReference type="ChEBI" id="CHEBI:15377"/>
        <dbReference type="ChEBI" id="CHEBI:15378"/>
        <dbReference type="ChEBI" id="CHEBI:17855"/>
        <dbReference type="ChEBI" id="CHEBI:18035"/>
        <dbReference type="ChEBI" id="CHEBI:28868"/>
        <dbReference type="EC" id="3.1.1.3"/>
    </reaction>
    <physiologicalReaction direction="left-to-right" evidence="1">
        <dbReference type="Rhea" id="RHEA:12045"/>
    </physiologicalReaction>
</comment>
<comment type="induction">
    <text evidence="4 5">Expression is not induced in medium containing Tween 40 as the sole source of carbon (PubMed:11131027). Expression is up-regulated during the yeast-to-hyphal transition (PubMed:11131027). Expressed in host cecum and infected mucosal tissues (stomach, hard palate, esophagus and tongue) (PubMed:15766791).</text>
</comment>
<comment type="similarity">
    <text evidence="7">Belongs to the AB hydrolase superfamily. Lipase family. Class Lip subfamily.</text>
</comment>
<proteinExistence type="evidence at transcript level"/>
<accession>Q9P4E7</accession>
<accession>A0A1D8PTZ0</accession>
<accession>Q5A3Y9</accession>
<evidence type="ECO:0000250" key="1">
    <source>
        <dbReference type="UniProtKB" id="O94091"/>
    </source>
</evidence>
<evidence type="ECO:0000250" key="2">
    <source>
        <dbReference type="UniProtKB" id="W3VKA4"/>
    </source>
</evidence>
<evidence type="ECO:0000255" key="3"/>
<evidence type="ECO:0000269" key="4">
    <source>
    </source>
</evidence>
<evidence type="ECO:0000269" key="5">
    <source>
    </source>
</evidence>
<evidence type="ECO:0000303" key="6">
    <source>
    </source>
</evidence>
<evidence type="ECO:0000305" key="7"/>
<evidence type="ECO:0000305" key="8">
    <source>
    </source>
</evidence>
<gene>
    <name evidence="6" type="primary">LIP7</name>
    <name type="ordered locus">CAALFM_CR09220CA</name>
    <name type="ORF">CaO19.7320</name>
</gene>
<dbReference type="EC" id="3.1.1.3" evidence="1"/>
<dbReference type="EMBL" id="AF191320">
    <property type="protein sequence ID" value="AAF79928.1"/>
    <property type="molecule type" value="Genomic_DNA"/>
</dbReference>
<dbReference type="EMBL" id="CP017630">
    <property type="protein sequence ID" value="AOW31587.1"/>
    <property type="molecule type" value="Genomic_DNA"/>
</dbReference>
<dbReference type="RefSeq" id="XP_716454.1">
    <property type="nucleotide sequence ID" value="XM_711361.1"/>
</dbReference>
<dbReference type="SMR" id="Q9P4E7"/>
<dbReference type="STRING" id="237561.Q9P4E7"/>
<dbReference type="ESTHER" id="canal-LIP7">
    <property type="family name" value="Fungal-Bact_LIP"/>
</dbReference>
<dbReference type="GlyCosmos" id="Q9P4E7">
    <property type="glycosylation" value="8 sites, No reported glycans"/>
</dbReference>
<dbReference type="EnsemblFungi" id="CR_09220C_A-T">
    <property type="protein sequence ID" value="CR_09220C_A-T-p1"/>
    <property type="gene ID" value="CR_09220C_A"/>
</dbReference>
<dbReference type="GeneID" id="3641917"/>
<dbReference type="KEGG" id="cal:CAALFM_CR09220CA"/>
<dbReference type="CGD" id="CAL0000199825">
    <property type="gene designation" value="LIP7"/>
</dbReference>
<dbReference type="VEuPathDB" id="FungiDB:CR_09220C_A"/>
<dbReference type="eggNOG" id="ENOG502S2P7">
    <property type="taxonomic scope" value="Eukaryota"/>
</dbReference>
<dbReference type="HOGENOM" id="CLU_029538_5_0_1"/>
<dbReference type="InParanoid" id="Q9P4E7"/>
<dbReference type="OMA" id="TTDSHFK"/>
<dbReference type="OrthoDB" id="2373480at2759"/>
<dbReference type="Proteomes" id="UP000000559">
    <property type="component" value="Chromosome R"/>
</dbReference>
<dbReference type="GO" id="GO:0004806">
    <property type="term" value="F:triacylglycerol lipase activity"/>
    <property type="evidence" value="ECO:0007669"/>
    <property type="project" value="UniProtKB-EC"/>
</dbReference>
<dbReference type="GO" id="GO:0016042">
    <property type="term" value="P:lipid catabolic process"/>
    <property type="evidence" value="ECO:0007669"/>
    <property type="project" value="UniProtKB-KW"/>
</dbReference>
<dbReference type="Gene3D" id="1.10.260.130">
    <property type="match status" value="1"/>
</dbReference>
<dbReference type="Gene3D" id="3.40.50.1820">
    <property type="entry name" value="alpha/beta hydrolase"/>
    <property type="match status" value="1"/>
</dbReference>
<dbReference type="InterPro" id="IPR029058">
    <property type="entry name" value="AB_hydrolase_fold"/>
</dbReference>
<dbReference type="InterPro" id="IPR005152">
    <property type="entry name" value="Lipase_secreted"/>
</dbReference>
<dbReference type="PANTHER" id="PTHR34853">
    <property type="match status" value="1"/>
</dbReference>
<dbReference type="PANTHER" id="PTHR34853:SF1">
    <property type="entry name" value="LIPASE 5"/>
    <property type="match status" value="1"/>
</dbReference>
<dbReference type="Pfam" id="PF03583">
    <property type="entry name" value="LIP"/>
    <property type="match status" value="1"/>
</dbReference>
<dbReference type="SUPFAM" id="SSF53474">
    <property type="entry name" value="alpha/beta-Hydrolases"/>
    <property type="match status" value="1"/>
</dbReference>
<protein>
    <recommendedName>
        <fullName evidence="6">Lipase 7</fullName>
        <ecNumber evidence="1">3.1.1.3</ecNumber>
    </recommendedName>
</protein>
<reference key="1">
    <citation type="journal article" date="2000" name="Arch. Microbiol.">
        <title>Secreted lipases of Candida albicans: cloning, characterisation and expression analysis of a new gene family with at least ten members.</title>
        <authorList>
            <person name="Hube B."/>
            <person name="Stehr F."/>
            <person name="Bossenz M."/>
            <person name="Mazur A."/>
            <person name="Kretschmar M."/>
            <person name="Schaefer W."/>
        </authorList>
    </citation>
    <scope>NUCLEOTIDE SEQUENCE [GENOMIC DNA]</scope>
    <scope>SUBCELLULAR LOCATION</scope>
    <scope>FUNCTION</scope>
    <scope>INDUCTION</scope>
    <source>
        <strain>SC5314 / ATCC MYA-2876</strain>
    </source>
</reference>
<reference key="2">
    <citation type="journal article" date="2004" name="Proc. Natl. Acad. Sci. U.S.A.">
        <title>The diploid genome sequence of Candida albicans.</title>
        <authorList>
            <person name="Jones T."/>
            <person name="Federspiel N.A."/>
            <person name="Chibana H."/>
            <person name="Dungan J."/>
            <person name="Kalman S."/>
            <person name="Magee B.B."/>
            <person name="Newport G."/>
            <person name="Thorstenson Y.R."/>
            <person name="Agabian N."/>
            <person name="Magee P.T."/>
            <person name="Davis R.W."/>
            <person name="Scherer S."/>
        </authorList>
    </citation>
    <scope>NUCLEOTIDE SEQUENCE [LARGE SCALE GENOMIC DNA]</scope>
    <source>
        <strain>SC5314 / ATCC MYA-2876</strain>
    </source>
</reference>
<reference key="3">
    <citation type="journal article" date="2007" name="Genome Biol.">
        <title>Assembly of the Candida albicans genome into sixteen supercontigs aligned on the eight chromosomes.</title>
        <authorList>
            <person name="van het Hoog M."/>
            <person name="Rast T.J."/>
            <person name="Martchenko M."/>
            <person name="Grindle S."/>
            <person name="Dignard D."/>
            <person name="Hogues H."/>
            <person name="Cuomo C."/>
            <person name="Berriman M."/>
            <person name="Scherer S."/>
            <person name="Magee B.B."/>
            <person name="Whiteway M."/>
            <person name="Chibana H."/>
            <person name="Nantel A."/>
            <person name="Magee P.T."/>
        </authorList>
    </citation>
    <scope>GENOME REANNOTATION</scope>
    <source>
        <strain>SC5314 / ATCC MYA-2876</strain>
    </source>
</reference>
<reference key="4">
    <citation type="journal article" date="2013" name="Genome Biol.">
        <title>Assembly of a phased diploid Candida albicans genome facilitates allele-specific measurements and provides a simple model for repeat and indel structure.</title>
        <authorList>
            <person name="Muzzey D."/>
            <person name="Schwartz K."/>
            <person name="Weissman J.S."/>
            <person name="Sherlock G."/>
        </authorList>
    </citation>
    <scope>NUCLEOTIDE SEQUENCE [LARGE SCALE GENOMIC DNA]</scope>
    <scope>GENOME REANNOTATION</scope>
    <source>
        <strain>SC5314 / ATCC MYA-2876</strain>
    </source>
</reference>
<reference key="5">
    <citation type="journal article" date="2004" name="FEMS Yeast Res.">
        <title>Expression analysis of the Candida albicans lipase gene family during experimental infections and in patient samples.</title>
        <authorList>
            <person name="Stehr F."/>
            <person name="Felk A."/>
            <person name="Gacser A."/>
            <person name="Kretschmar M."/>
            <person name="Maehnss B."/>
            <person name="Neuber K."/>
            <person name="Hube B."/>
            <person name="Schaefer W."/>
        </authorList>
    </citation>
    <scope>INDUCTION</scope>
</reference>
<reference key="6">
    <citation type="journal article" date="2005" name="FEMS Microbiol. Lett.">
        <title>Differential Candida albicans lipase gene expression during alimentary tract colonization and infection.</title>
        <authorList>
            <person name="Schofield D.A."/>
            <person name="Westwater C."/>
            <person name="Warner T."/>
            <person name="Balish E."/>
        </authorList>
    </citation>
    <scope>INDUCTION</scope>
</reference>
<organism>
    <name type="scientific">Candida albicans (strain SC5314 / ATCC MYA-2876)</name>
    <name type="common">Yeast</name>
    <dbReference type="NCBI Taxonomy" id="237561"/>
    <lineage>
        <taxon>Eukaryota</taxon>
        <taxon>Fungi</taxon>
        <taxon>Dikarya</taxon>
        <taxon>Ascomycota</taxon>
        <taxon>Saccharomycotina</taxon>
        <taxon>Pichiomycetes</taxon>
        <taxon>Debaryomycetaceae</taxon>
        <taxon>Candida/Lodderomyces clade</taxon>
        <taxon>Candida</taxon>
    </lineage>
</organism>
<name>LIP7_CANAL</name>